<name>TKT_MYCTU</name>
<feature type="initiator methionine" description="Removed" evidence="4">
    <location>
        <position position="1"/>
    </location>
</feature>
<feature type="chain" id="PRO_0000191863" description="Transketolase">
    <location>
        <begin position="2"/>
        <end position="700"/>
    </location>
</feature>
<feature type="active site" description="Proton donor" evidence="3">
    <location>
        <position position="441"/>
    </location>
</feature>
<feature type="binding site" evidence="1">
    <location>
        <position position="45"/>
    </location>
    <ligand>
        <name>substrate</name>
    </ligand>
</feature>
<feature type="binding site">
    <location>
        <position position="48"/>
    </location>
    <ligand>
        <name>thiamine diphosphate</name>
        <dbReference type="ChEBI" id="CHEBI:58937"/>
    </ligand>
</feature>
<feature type="binding site">
    <location>
        <position position="85"/>
    </location>
    <ligand>
        <name>thiamine diphosphate</name>
        <dbReference type="ChEBI" id="CHEBI:58937"/>
    </ligand>
</feature>
<feature type="binding site">
    <location>
        <begin position="133"/>
        <end position="135"/>
    </location>
    <ligand>
        <name>thiamine diphosphate</name>
        <dbReference type="ChEBI" id="CHEBI:58937"/>
    </ligand>
</feature>
<feature type="binding site">
    <location>
        <position position="135"/>
    </location>
    <ligand>
        <name>thiamine diphosphate</name>
        <dbReference type="ChEBI" id="CHEBI:58937"/>
    </ligand>
</feature>
<feature type="binding site" evidence="2">
    <location>
        <position position="177"/>
    </location>
    <ligand>
        <name>Mg(2+)</name>
        <dbReference type="ChEBI" id="CHEBI:18420"/>
    </ligand>
</feature>
<feature type="binding site">
    <location>
        <position position="178"/>
    </location>
    <ligand>
        <name>thiamine diphosphate</name>
        <dbReference type="ChEBI" id="CHEBI:58937"/>
    </ligand>
</feature>
<feature type="binding site" evidence="2">
    <location>
        <position position="207"/>
    </location>
    <ligand>
        <name>Mg(2+)</name>
        <dbReference type="ChEBI" id="CHEBI:18420"/>
    </ligand>
</feature>
<feature type="binding site">
    <location>
        <position position="207"/>
    </location>
    <ligand>
        <name>thiamine diphosphate</name>
        <dbReference type="ChEBI" id="CHEBI:58937"/>
    </ligand>
</feature>
<feature type="binding site" evidence="2">
    <location>
        <position position="209"/>
    </location>
    <ligand>
        <name>Mg(2+)</name>
        <dbReference type="ChEBI" id="CHEBI:18420"/>
    </ligand>
</feature>
<feature type="binding site" evidence="1">
    <location>
        <position position="283"/>
    </location>
    <ligand>
        <name>substrate</name>
    </ligand>
</feature>
<feature type="binding site">
    <location>
        <position position="283"/>
    </location>
    <ligand>
        <name>thiamine diphosphate</name>
        <dbReference type="ChEBI" id="CHEBI:58937"/>
    </ligand>
</feature>
<feature type="binding site" evidence="1">
    <location>
        <position position="378"/>
    </location>
    <ligand>
        <name>substrate</name>
    </ligand>
</feature>
<feature type="binding site" evidence="1">
    <location>
        <position position="405"/>
    </location>
    <ligand>
        <name>substrate</name>
    </ligand>
</feature>
<feature type="binding site">
    <location>
        <position position="467"/>
    </location>
    <ligand>
        <name>thiamine diphosphate</name>
        <dbReference type="ChEBI" id="CHEBI:58937"/>
    </ligand>
</feature>
<feature type="binding site" evidence="1">
    <location>
        <position position="491"/>
    </location>
    <ligand>
        <name>substrate</name>
    </ligand>
</feature>
<feature type="binding site" evidence="1">
    <location>
        <position position="499"/>
    </location>
    <ligand>
        <name>substrate</name>
    </ligand>
</feature>
<feature type="binding site" evidence="1">
    <location>
        <position position="552"/>
    </location>
    <ligand>
        <name>substrate</name>
    </ligand>
</feature>
<feature type="site" description="Important for catalytic activity" evidence="1">
    <location>
        <position position="45"/>
    </location>
</feature>
<feature type="site" description="Important for catalytic activity" evidence="1">
    <location>
        <position position="283"/>
    </location>
</feature>
<feature type="modified residue" description="N-acetylthreonine" evidence="4">
    <location>
        <position position="2"/>
    </location>
</feature>
<feature type="helix" evidence="5">
    <location>
        <begin position="7"/>
        <end position="10"/>
    </location>
</feature>
<feature type="helix" evidence="5">
    <location>
        <begin position="21"/>
        <end position="41"/>
    </location>
</feature>
<feature type="helix" evidence="5">
    <location>
        <begin position="47"/>
        <end position="51"/>
    </location>
</feature>
<feature type="helix" evidence="5">
    <location>
        <begin position="53"/>
        <end position="61"/>
    </location>
</feature>
<feature type="strand" evidence="5">
    <location>
        <begin position="78"/>
        <end position="83"/>
    </location>
</feature>
<feature type="helix" evidence="5">
    <location>
        <begin position="87"/>
        <end position="96"/>
    </location>
</feature>
<feature type="helix" evidence="5">
    <location>
        <begin position="103"/>
        <end position="106"/>
    </location>
</feature>
<feature type="turn" evidence="5">
    <location>
        <begin position="107"/>
        <end position="110"/>
    </location>
</feature>
<feature type="helix" evidence="5">
    <location>
        <begin position="137"/>
        <end position="156"/>
    </location>
</feature>
<feature type="strand" evidence="5">
    <location>
        <begin position="171"/>
        <end position="176"/>
    </location>
</feature>
<feature type="helix" evidence="5">
    <location>
        <begin position="177"/>
        <end position="181"/>
    </location>
</feature>
<feature type="helix" evidence="5">
    <location>
        <begin position="183"/>
        <end position="194"/>
    </location>
</feature>
<feature type="strand" evidence="5">
    <location>
        <begin position="200"/>
        <end position="206"/>
    </location>
</feature>
<feature type="strand" evidence="5">
    <location>
        <begin position="208"/>
        <end position="210"/>
    </location>
</feature>
<feature type="helix" evidence="5">
    <location>
        <begin position="215"/>
        <end position="217"/>
    </location>
</feature>
<feature type="helix" evidence="5">
    <location>
        <begin position="223"/>
        <end position="230"/>
    </location>
</feature>
<feature type="strand" evidence="5">
    <location>
        <begin position="233"/>
        <end position="238"/>
    </location>
</feature>
<feature type="helix" evidence="5">
    <location>
        <begin position="243"/>
        <end position="255"/>
    </location>
</feature>
<feature type="strand" evidence="5">
    <location>
        <begin position="261"/>
        <end position="266"/>
    </location>
</feature>
<feature type="turn" evidence="5">
    <location>
        <begin position="269"/>
        <end position="272"/>
    </location>
</feature>
<feature type="turn" evidence="5">
    <location>
        <begin position="274"/>
        <end position="278"/>
    </location>
</feature>
<feature type="helix" evidence="5">
    <location>
        <begin position="280"/>
        <end position="284"/>
    </location>
</feature>
<feature type="helix" evidence="5">
    <location>
        <begin position="289"/>
        <end position="299"/>
    </location>
</feature>
<feature type="helix" evidence="5">
    <location>
        <begin position="311"/>
        <end position="317"/>
    </location>
</feature>
<feature type="helix" evidence="5">
    <location>
        <begin position="319"/>
        <end position="341"/>
    </location>
</feature>
<feature type="helix" evidence="5">
    <location>
        <begin position="343"/>
        <end position="353"/>
    </location>
</feature>
<feature type="turn" evidence="5">
    <location>
        <begin position="359"/>
        <end position="362"/>
    </location>
</feature>
<feature type="helix" evidence="5">
    <location>
        <begin position="377"/>
        <end position="388"/>
    </location>
</feature>
<feature type="turn" evidence="5">
    <location>
        <begin position="389"/>
        <end position="391"/>
    </location>
</feature>
<feature type="strand" evidence="5">
    <location>
        <begin position="395"/>
        <end position="401"/>
    </location>
</feature>
<feature type="helix" evidence="5">
    <location>
        <begin position="403"/>
        <end position="406"/>
    </location>
</feature>
<feature type="strand" evidence="5">
    <location>
        <begin position="415"/>
        <end position="417"/>
    </location>
</feature>
<feature type="helix" evidence="5">
    <location>
        <begin position="419"/>
        <end position="421"/>
    </location>
</feature>
<feature type="strand" evidence="5">
    <location>
        <begin position="434"/>
        <end position="436"/>
    </location>
</feature>
<feature type="helix" evidence="5">
    <location>
        <begin position="441"/>
        <end position="454"/>
    </location>
</feature>
<feature type="strand" evidence="5">
    <location>
        <begin position="458"/>
        <end position="464"/>
    </location>
</feature>
<feature type="helix" evidence="5">
    <location>
        <begin position="465"/>
        <end position="471"/>
    </location>
</feature>
<feature type="helix" evidence="5">
    <location>
        <begin position="472"/>
        <end position="481"/>
    </location>
</feature>
<feature type="strand" evidence="5">
    <location>
        <begin position="486"/>
        <end position="490"/>
    </location>
</feature>
<feature type="helix" evidence="5">
    <location>
        <begin position="494"/>
        <end position="496"/>
    </location>
</feature>
<feature type="turn" evidence="5">
    <location>
        <begin position="501"/>
        <end position="503"/>
    </location>
</feature>
<feature type="helix" evidence="5">
    <location>
        <begin position="508"/>
        <end position="513"/>
    </location>
</feature>
<feature type="strand" evidence="5">
    <location>
        <begin position="519"/>
        <end position="521"/>
    </location>
</feature>
<feature type="helix" evidence="5">
    <location>
        <begin position="526"/>
        <end position="537"/>
    </location>
</feature>
<feature type="turn" evidence="5">
    <location>
        <begin position="538"/>
        <end position="541"/>
    </location>
</feature>
<feature type="strand" evidence="5">
    <location>
        <begin position="546"/>
        <end position="549"/>
    </location>
</feature>
<feature type="strand" evidence="5">
    <location>
        <begin position="552"/>
        <end position="555"/>
    </location>
</feature>
<feature type="helix" evidence="5">
    <location>
        <begin position="563"/>
        <end position="568"/>
    </location>
</feature>
<feature type="strand" evidence="5">
    <location>
        <begin position="571"/>
        <end position="574"/>
    </location>
</feature>
<feature type="strand" evidence="5">
    <location>
        <begin position="586"/>
        <end position="591"/>
    </location>
</feature>
<feature type="helix" evidence="5">
    <location>
        <begin position="593"/>
        <end position="595"/>
    </location>
</feature>
<feature type="helix" evidence="5">
    <location>
        <begin position="596"/>
        <end position="607"/>
    </location>
</feature>
<feature type="turn" evidence="5">
    <location>
        <begin position="608"/>
        <end position="610"/>
    </location>
</feature>
<feature type="strand" evidence="5">
    <location>
        <begin position="613"/>
        <end position="617"/>
    </location>
</feature>
<feature type="helix" evidence="5">
    <location>
        <begin position="621"/>
        <end position="626"/>
    </location>
</feature>
<feature type="helix" evidence="5">
    <location>
        <begin position="629"/>
        <end position="635"/>
    </location>
</feature>
<feature type="strand" evidence="5">
    <location>
        <begin position="643"/>
        <end position="646"/>
    </location>
</feature>
<feature type="helix" evidence="5">
    <location>
        <begin position="652"/>
        <end position="654"/>
    </location>
</feature>
<feature type="helix" evidence="5">
    <location>
        <begin position="655"/>
        <end position="658"/>
    </location>
</feature>
<feature type="strand" evidence="5">
    <location>
        <begin position="663"/>
        <end position="665"/>
    </location>
</feature>
<feature type="helix" evidence="5">
    <location>
        <begin position="676"/>
        <end position="682"/>
    </location>
</feature>
<feature type="helix" evidence="5">
    <location>
        <begin position="687"/>
        <end position="698"/>
    </location>
</feature>
<dbReference type="EC" id="2.2.1.1"/>
<dbReference type="EMBL" id="AL123456">
    <property type="protein sequence ID" value="CCP44208.1"/>
    <property type="molecule type" value="Genomic_DNA"/>
</dbReference>
<dbReference type="PIR" id="D70917">
    <property type="entry name" value="D70917"/>
</dbReference>
<dbReference type="RefSeq" id="NP_215965.1">
    <property type="nucleotide sequence ID" value="NC_000962.3"/>
</dbReference>
<dbReference type="RefSeq" id="WP_003916819.1">
    <property type="nucleotide sequence ID" value="NZ_NVQJ01000071.1"/>
</dbReference>
<dbReference type="PDB" id="3RIM">
    <property type="method" value="X-ray"/>
    <property type="resolution" value="2.49 A"/>
    <property type="chains" value="A/B/C/D=1-700"/>
</dbReference>
<dbReference type="PDBsum" id="3RIM"/>
<dbReference type="SMR" id="P9WG25"/>
<dbReference type="FunCoup" id="P9WG25">
    <property type="interactions" value="461"/>
</dbReference>
<dbReference type="STRING" id="83332.Rv1449c"/>
<dbReference type="iPTMnet" id="P9WG25"/>
<dbReference type="PaxDb" id="83332-Rv1449c"/>
<dbReference type="DNASU" id="886638"/>
<dbReference type="GeneID" id="886638"/>
<dbReference type="KEGG" id="mtu:Rv1449c"/>
<dbReference type="KEGG" id="mtv:RVBD_1449c"/>
<dbReference type="TubercuList" id="Rv1449c"/>
<dbReference type="eggNOG" id="COG0021">
    <property type="taxonomic scope" value="Bacteria"/>
</dbReference>
<dbReference type="InParanoid" id="P9WG25"/>
<dbReference type="OrthoDB" id="8732661at2"/>
<dbReference type="PhylomeDB" id="P9WG25"/>
<dbReference type="BRENDA" id="2.2.1.1">
    <property type="organism ID" value="3445"/>
</dbReference>
<dbReference type="SABIO-RK" id="P9WG25"/>
<dbReference type="EvolutionaryTrace" id="P9WG25"/>
<dbReference type="Proteomes" id="UP000001584">
    <property type="component" value="Chromosome"/>
</dbReference>
<dbReference type="GO" id="GO:0005829">
    <property type="term" value="C:cytosol"/>
    <property type="evidence" value="ECO:0007005"/>
    <property type="project" value="MTBBASE"/>
</dbReference>
<dbReference type="GO" id="GO:0005576">
    <property type="term" value="C:extracellular region"/>
    <property type="evidence" value="ECO:0007005"/>
    <property type="project" value="MTBBASE"/>
</dbReference>
<dbReference type="GO" id="GO:0009274">
    <property type="term" value="C:peptidoglycan-based cell wall"/>
    <property type="evidence" value="ECO:0007005"/>
    <property type="project" value="MTBBASE"/>
</dbReference>
<dbReference type="GO" id="GO:0005886">
    <property type="term" value="C:plasma membrane"/>
    <property type="evidence" value="ECO:0007005"/>
    <property type="project" value="MTBBASE"/>
</dbReference>
<dbReference type="GO" id="GO:0000287">
    <property type="term" value="F:magnesium ion binding"/>
    <property type="evidence" value="ECO:0007669"/>
    <property type="project" value="UniProtKB-ARBA"/>
</dbReference>
<dbReference type="GO" id="GO:0004802">
    <property type="term" value="F:transketolase activity"/>
    <property type="evidence" value="ECO:0000318"/>
    <property type="project" value="GO_Central"/>
</dbReference>
<dbReference type="GO" id="GO:0006098">
    <property type="term" value="P:pentose-phosphate shunt"/>
    <property type="evidence" value="ECO:0000318"/>
    <property type="project" value="GO_Central"/>
</dbReference>
<dbReference type="CDD" id="cd07033">
    <property type="entry name" value="TPP_PYR_DXS_TK_like"/>
    <property type="match status" value="1"/>
</dbReference>
<dbReference type="CDD" id="cd02012">
    <property type="entry name" value="TPP_TK"/>
    <property type="match status" value="1"/>
</dbReference>
<dbReference type="FunFam" id="3.40.50.920:FF:000003">
    <property type="entry name" value="Transketolase"/>
    <property type="match status" value="1"/>
</dbReference>
<dbReference type="FunFam" id="3.40.50.970:FF:000003">
    <property type="entry name" value="Transketolase"/>
    <property type="match status" value="1"/>
</dbReference>
<dbReference type="FunFam" id="3.40.50.970:FF:000004">
    <property type="entry name" value="Transketolase"/>
    <property type="match status" value="1"/>
</dbReference>
<dbReference type="Gene3D" id="3.40.50.920">
    <property type="match status" value="1"/>
</dbReference>
<dbReference type="Gene3D" id="3.40.50.970">
    <property type="match status" value="2"/>
</dbReference>
<dbReference type="InterPro" id="IPR029061">
    <property type="entry name" value="THDP-binding"/>
</dbReference>
<dbReference type="InterPro" id="IPR009014">
    <property type="entry name" value="Transketo_C/PFOR_II"/>
</dbReference>
<dbReference type="InterPro" id="IPR055152">
    <property type="entry name" value="Transketolase-like_C_2"/>
</dbReference>
<dbReference type="InterPro" id="IPR005475">
    <property type="entry name" value="Transketolase-like_Pyr-bd"/>
</dbReference>
<dbReference type="InterPro" id="IPR005478">
    <property type="entry name" value="Transketolase_bac-like"/>
</dbReference>
<dbReference type="InterPro" id="IPR020826">
    <property type="entry name" value="Transketolase_BS"/>
</dbReference>
<dbReference type="InterPro" id="IPR049557">
    <property type="entry name" value="Transketolase_CS"/>
</dbReference>
<dbReference type="InterPro" id="IPR033247">
    <property type="entry name" value="Transketolase_fam"/>
</dbReference>
<dbReference type="InterPro" id="IPR005474">
    <property type="entry name" value="Transketolase_N"/>
</dbReference>
<dbReference type="NCBIfam" id="TIGR00232">
    <property type="entry name" value="tktlase_bact"/>
    <property type="match status" value="1"/>
</dbReference>
<dbReference type="PANTHER" id="PTHR43522">
    <property type="entry name" value="TRANSKETOLASE"/>
    <property type="match status" value="1"/>
</dbReference>
<dbReference type="PANTHER" id="PTHR43522:SF2">
    <property type="entry name" value="TRANSKETOLASE 1-RELATED"/>
    <property type="match status" value="1"/>
</dbReference>
<dbReference type="Pfam" id="PF02779">
    <property type="entry name" value="Transket_pyr"/>
    <property type="match status" value="1"/>
</dbReference>
<dbReference type="Pfam" id="PF22613">
    <property type="entry name" value="Transketolase_C_1"/>
    <property type="match status" value="1"/>
</dbReference>
<dbReference type="Pfam" id="PF00456">
    <property type="entry name" value="Transketolase_N"/>
    <property type="match status" value="1"/>
</dbReference>
<dbReference type="SMART" id="SM00861">
    <property type="entry name" value="Transket_pyr"/>
    <property type="match status" value="1"/>
</dbReference>
<dbReference type="SUPFAM" id="SSF52518">
    <property type="entry name" value="Thiamin diphosphate-binding fold (THDP-binding)"/>
    <property type="match status" value="2"/>
</dbReference>
<dbReference type="SUPFAM" id="SSF52922">
    <property type="entry name" value="TK C-terminal domain-like"/>
    <property type="match status" value="1"/>
</dbReference>
<dbReference type="PROSITE" id="PS00801">
    <property type="entry name" value="TRANSKETOLASE_1"/>
    <property type="match status" value="1"/>
</dbReference>
<dbReference type="PROSITE" id="PS00802">
    <property type="entry name" value="TRANSKETOLASE_2"/>
    <property type="match status" value="1"/>
</dbReference>
<keyword id="KW-0002">3D-structure</keyword>
<keyword id="KW-0007">Acetylation</keyword>
<keyword id="KW-0106">Calcium</keyword>
<keyword id="KW-0460">Magnesium</keyword>
<keyword id="KW-0479">Metal-binding</keyword>
<keyword id="KW-1185">Reference proteome</keyword>
<keyword id="KW-0786">Thiamine pyrophosphate</keyword>
<keyword id="KW-0808">Transferase</keyword>
<accession>P9WG25</accession>
<accession>L0T9N4</accession>
<accession>O06811</accession>
<proteinExistence type="evidence at protein level"/>
<gene>
    <name type="primary">tkt</name>
    <name type="ordered locus">Rv1449c</name>
    <name type="ORF">MTCY493.05</name>
</gene>
<organism>
    <name type="scientific">Mycobacterium tuberculosis (strain ATCC 25618 / H37Rv)</name>
    <dbReference type="NCBI Taxonomy" id="83332"/>
    <lineage>
        <taxon>Bacteria</taxon>
        <taxon>Bacillati</taxon>
        <taxon>Actinomycetota</taxon>
        <taxon>Actinomycetes</taxon>
        <taxon>Mycobacteriales</taxon>
        <taxon>Mycobacteriaceae</taxon>
        <taxon>Mycobacterium</taxon>
        <taxon>Mycobacterium tuberculosis complex</taxon>
    </lineage>
</organism>
<sequence length="700" mass="75589">MTTLEEISALTRPRHPDYWTEIDSAAVDTIRVLAADAVQKVGNGHPGTAMSLAPLAYTLFQRTMRHDPSDTHWLGRDRFVLSAGHSSLTLYIQLYLGGFGLELSDIESLRTWGSKTPGHPEFRHTPGVEITTGPLGQGLASAVGMAMASRYERGLFDPDAEPGASPFDHYIYVIASDGDIEEGVTSEASSLAAVQQLGNLIVFYDRNQISIEDDTNIALCEDTAARYRAYGWHVQEVEGGENVVGIEEAIANAQAVTDRPSFIALRTVIGYPAPNLMDTGKAHGAALGDDEVAAVKKIVGFDPDKTFQVREDVLTHTRGLVARGKQAHERWQLEFDAWARREPERKALLDRLLAQKLPDGWDADLPHWEPGSKALATRAASGAVLSALGPKLPELWGGSADLAGSNNTTIKGADSFGPPSISTKEYTAHWYGRTLHFGVREHAMGAILSGIVLHGPTRAYGGTFLQFSDYMRPAVRLAALMDIDTIYVWTHDSIGLGEDGPTHQPIEHLSALRAIPRLSVVRPADANETAYAWRTILARRNGSGPVGLILTRQGVPVLDGTDAEGVARGGYVLSDAGGLQPGEEPDVILIATGSEVQLAVAAQTLLADNDILARVVSMPCLEWFEAQPYEYRDAVLPPTVSARVAVEAGVAQCWHQLVGDTGEIVSIEHYGESADHKTLFREYGFTAEAVAAAAERALDN</sequence>
<comment type="function">
    <text evidence="2">Catalyzes the reversible transfer of a two-carbon ketol group from sedoheptulose-7-phosphate to glyceraldehyde-3-phosphate, producing xylulose-5-phosphate and ribose-5-phosphate. Catalyzes the transfer of a two-carbon ketol group from a ketose donor to an aldose acceptor, via a covalent intermediate with the cofactor thiamine pyrophosphate.</text>
</comment>
<comment type="catalytic activity">
    <reaction evidence="2">
        <text>D-sedoheptulose 7-phosphate + D-glyceraldehyde 3-phosphate = aldehydo-D-ribose 5-phosphate + D-xylulose 5-phosphate</text>
        <dbReference type="Rhea" id="RHEA:10508"/>
        <dbReference type="ChEBI" id="CHEBI:57483"/>
        <dbReference type="ChEBI" id="CHEBI:57737"/>
        <dbReference type="ChEBI" id="CHEBI:58273"/>
        <dbReference type="ChEBI" id="CHEBI:59776"/>
        <dbReference type="EC" id="2.2.1.1"/>
    </reaction>
</comment>
<comment type="cofactor">
    <cofactor evidence="2">
        <name>Mg(2+)</name>
        <dbReference type="ChEBI" id="CHEBI:18420"/>
    </cofactor>
    <cofactor evidence="2">
        <name>Ca(2+)</name>
        <dbReference type="ChEBI" id="CHEBI:29108"/>
    </cofactor>
    <cofactor evidence="2">
        <name>Mn(2+)</name>
        <dbReference type="ChEBI" id="CHEBI:29035"/>
    </cofactor>
    <cofactor evidence="2">
        <name>Co(2+)</name>
        <dbReference type="ChEBI" id="CHEBI:48828"/>
    </cofactor>
    <text evidence="2">Binds 1 Mg(2+) ion per subunit. Can also utilize other divalent metal cations, such as Ca(2+), Mn(2+) and Co(2+).</text>
</comment>
<comment type="cofactor">
    <cofactor evidence="2">
        <name>thiamine diphosphate</name>
        <dbReference type="ChEBI" id="CHEBI:58937"/>
    </cofactor>
    <text evidence="2">Binds 1 thiamine pyrophosphate per subunit.</text>
</comment>
<comment type="biophysicochemical properties">
    <kinetics>
        <KM evidence="2">0.8 mM for ribose 5-phosphate</KM>
        <KM evidence="2">0.6 mM for fructose 6-phosphate</KM>
        <KM evidence="2">0.35 mM for xylulose 5-phosphate</KM>
    </kinetics>
</comment>
<comment type="subunit">
    <text evidence="2">Homodimer.</text>
</comment>
<comment type="similarity">
    <text evidence="3">Belongs to the transketolase family.</text>
</comment>
<protein>
    <recommendedName>
        <fullName>Transketolase</fullName>
        <shortName>TK</shortName>
        <ecNumber>2.2.1.1</ecNumber>
    </recommendedName>
</protein>
<evidence type="ECO:0000250" key="1"/>
<evidence type="ECO:0000269" key="2">
    <source>
    </source>
</evidence>
<evidence type="ECO:0000305" key="3"/>
<evidence type="ECO:0007744" key="4">
    <source>
    </source>
</evidence>
<evidence type="ECO:0007829" key="5">
    <source>
        <dbReference type="PDB" id="3RIM"/>
    </source>
</evidence>
<reference key="1">
    <citation type="journal article" date="1998" name="Nature">
        <title>Deciphering the biology of Mycobacterium tuberculosis from the complete genome sequence.</title>
        <authorList>
            <person name="Cole S.T."/>
            <person name="Brosch R."/>
            <person name="Parkhill J."/>
            <person name="Garnier T."/>
            <person name="Churcher C.M."/>
            <person name="Harris D.E."/>
            <person name="Gordon S.V."/>
            <person name="Eiglmeier K."/>
            <person name="Gas S."/>
            <person name="Barry C.E. III"/>
            <person name="Tekaia F."/>
            <person name="Badcock K."/>
            <person name="Basham D."/>
            <person name="Brown D."/>
            <person name="Chillingworth T."/>
            <person name="Connor R."/>
            <person name="Davies R.M."/>
            <person name="Devlin K."/>
            <person name="Feltwell T."/>
            <person name="Gentles S."/>
            <person name="Hamlin N."/>
            <person name="Holroyd S."/>
            <person name="Hornsby T."/>
            <person name="Jagels K."/>
            <person name="Krogh A."/>
            <person name="McLean J."/>
            <person name="Moule S."/>
            <person name="Murphy L.D."/>
            <person name="Oliver S."/>
            <person name="Osborne J."/>
            <person name="Quail M.A."/>
            <person name="Rajandream M.A."/>
            <person name="Rogers J."/>
            <person name="Rutter S."/>
            <person name="Seeger K."/>
            <person name="Skelton S."/>
            <person name="Squares S."/>
            <person name="Squares R."/>
            <person name="Sulston J.E."/>
            <person name="Taylor K."/>
            <person name="Whitehead S."/>
            <person name="Barrell B.G."/>
        </authorList>
    </citation>
    <scope>NUCLEOTIDE SEQUENCE [LARGE SCALE GENOMIC DNA]</scope>
    <source>
        <strain>ATCC 25618 / H37Rv</strain>
    </source>
</reference>
<reference key="2">
    <citation type="journal article" date="2011" name="Mol. Cell. Proteomics">
        <title>Proteogenomic analysis of Mycobacterium tuberculosis by high resolution mass spectrometry.</title>
        <authorList>
            <person name="Kelkar D.S."/>
            <person name="Kumar D."/>
            <person name="Kumar P."/>
            <person name="Balakrishnan L."/>
            <person name="Muthusamy B."/>
            <person name="Yadav A.K."/>
            <person name="Shrivastava P."/>
            <person name="Marimuthu A."/>
            <person name="Anand S."/>
            <person name="Sundaram H."/>
            <person name="Kingsbury R."/>
            <person name="Harsha H.C."/>
            <person name="Nair B."/>
            <person name="Prasad T.S."/>
            <person name="Chauhan D.S."/>
            <person name="Katoch K."/>
            <person name="Katoch V.M."/>
            <person name="Kumar P."/>
            <person name="Chaerkady R."/>
            <person name="Ramachandran S."/>
            <person name="Dash D."/>
            <person name="Pandey A."/>
        </authorList>
    </citation>
    <scope>ACETYLATION [LARGE SCALE ANALYSIS] AT THR-2</scope>
    <scope>CLEAVAGE OF INITIATOR METHIONINE [LARGE SCALE ANALYSIS]</scope>
    <scope>IDENTIFICATION BY MASS SPECTROMETRY [LARGE SCALE ANALYSIS]</scope>
    <source>
        <strain>ATCC 25618 / H37Rv</strain>
    </source>
</reference>
<reference key="3">
    <citation type="journal article" date="2012" name="Open Biol.">
        <title>Structure and function of the transketolase from Mycobacterium tuberculosis and comparison with the human enzyme.</title>
        <authorList>
            <person name="Fullam E."/>
            <person name="Pojer F."/>
            <person name="Bergfors T."/>
            <person name="Jones T.A."/>
            <person name="Cole S.T."/>
        </authorList>
    </citation>
    <scope>X-RAY CRYSTALLOGRAPHY (2.49 ANGSTROMS) IN COMPLEX WITH MAGNESIUM AND THIAMINE DIPHOSPHATE</scope>
    <scope>CATALYTIC ACTIVITY</scope>
    <scope>FUNCTION</scope>
    <scope>SUBUNIT</scope>
    <scope>COFACTOR</scope>
    <scope>BIOPHYSICOCHEMICAL PROPERTIES</scope>
</reference>